<comment type="subcellular location">
    <subcellularLocation>
        <location evidence="1">Mitochondrion</location>
    </subcellularLocation>
</comment>
<comment type="caution">
    <text evidence="1">Product of a dubious gene prediction. Partially overlaps Q0017.</text>
</comment>
<name>Q0010_YEAST</name>
<protein>
    <recommendedName>
        <fullName>Putative uncharacterized protein Q0010, mitochondrial</fullName>
    </recommendedName>
</protein>
<dbReference type="EMBL" id="KP263414">
    <property type="status" value="NOT_ANNOTATED_CDS"/>
    <property type="molecule type" value="Genomic_DNA"/>
</dbReference>
<dbReference type="PIR" id="S78634">
    <property type="entry name" value="S78634"/>
</dbReference>
<dbReference type="STRING" id="4932.Q0010"/>
<dbReference type="GlyGen" id="Q9ZZX9">
    <property type="glycosylation" value="1 site"/>
</dbReference>
<dbReference type="PaxDb" id="4932-Q0010"/>
<dbReference type="PeptideAtlas" id="Q9ZZX9"/>
<dbReference type="EnsemblFungi" id="Q0010_mRNA">
    <property type="protein sequence ID" value="Q0010"/>
    <property type="gene ID" value="Q0010"/>
</dbReference>
<dbReference type="AGR" id="SGD:S000007257"/>
<dbReference type="SGD" id="S000007257">
    <property type="gene designation" value="Q0010"/>
</dbReference>
<dbReference type="HOGENOM" id="CLU_1961316_0_0_1"/>
<dbReference type="InParanoid" id="Q9ZZX9"/>
<dbReference type="Proteomes" id="UP000002311">
    <property type="component" value="Mitochondrion"/>
</dbReference>
<dbReference type="RNAct" id="Q9ZZX9">
    <property type="molecule type" value="protein"/>
</dbReference>
<dbReference type="GO" id="GO:0005739">
    <property type="term" value="C:mitochondrion"/>
    <property type="evidence" value="ECO:0007669"/>
    <property type="project" value="UniProtKB-SubCell"/>
</dbReference>
<sequence>MYYIMFLYNMLLIIILIFYSIVGVPIIIFNNNYYWDPDIFLFIIYYFIKFIIIFNLYLYYMINYIVYTPSGSPPGRGTYILLYNMLYSYNMFIDYVMKFITCVTYMYLMFWLLSPTPSPYYVSEVPVS</sequence>
<accession>Q9ZZX9</accession>
<evidence type="ECO:0000305" key="1"/>
<keyword id="KW-0496">Mitochondrion</keyword>
<keyword id="KW-1185">Reference proteome</keyword>
<geneLocation type="mitochondrion"/>
<proteinExistence type="uncertain"/>
<reference key="1">
    <citation type="journal article" date="1998" name="FEBS Lett.">
        <title>The complete sequence of the mitochondrial genome of Saccharomyces cerevisiae.</title>
        <authorList>
            <person name="Foury F."/>
            <person name="Roganti T."/>
            <person name="Lecrenier N."/>
            <person name="Purnelle B."/>
        </authorList>
    </citation>
    <scope>NUCLEOTIDE SEQUENCE [LARGE SCALE GENOMIC DNA]</scope>
    <source>
        <strain>ATCC 96604 / S288c / FY1679</strain>
    </source>
</reference>
<reference key="2">
    <citation type="journal article" date="2014" name="G3 (Bethesda)">
        <title>The reference genome sequence of Saccharomyces cerevisiae: Then and now.</title>
        <authorList>
            <person name="Engel S.R."/>
            <person name="Dietrich F.S."/>
            <person name="Fisk D.G."/>
            <person name="Binkley G."/>
            <person name="Balakrishnan R."/>
            <person name="Costanzo M.C."/>
            <person name="Dwight S.S."/>
            <person name="Hitz B.C."/>
            <person name="Karra K."/>
            <person name="Nash R.S."/>
            <person name="Weng S."/>
            <person name="Wong E.D."/>
            <person name="Lloyd P."/>
            <person name="Skrzypek M.S."/>
            <person name="Miyasato S.R."/>
            <person name="Simison M."/>
            <person name="Cherry J.M."/>
        </authorList>
    </citation>
    <scope>GENOME REANNOTATION</scope>
    <source>
        <strain>ATCC 96604 / S288c / FY1679</strain>
    </source>
</reference>
<gene>
    <name type="ordered locus">Q0010</name>
    <name type="ORF">ORF6</name>
</gene>
<feature type="chain" id="PRO_0000299678" description="Putative uncharacterized protein Q0010, mitochondrial">
    <location>
        <begin position="1"/>
        <end position="128"/>
    </location>
</feature>
<organism>
    <name type="scientific">Saccharomyces cerevisiae (strain ATCC 204508 / S288c)</name>
    <name type="common">Baker's yeast</name>
    <dbReference type="NCBI Taxonomy" id="559292"/>
    <lineage>
        <taxon>Eukaryota</taxon>
        <taxon>Fungi</taxon>
        <taxon>Dikarya</taxon>
        <taxon>Ascomycota</taxon>
        <taxon>Saccharomycotina</taxon>
        <taxon>Saccharomycetes</taxon>
        <taxon>Saccharomycetales</taxon>
        <taxon>Saccharomycetaceae</taxon>
        <taxon>Saccharomyces</taxon>
    </lineage>
</organism>